<comment type="function">
    <text evidence="2">Stabilizer subunit of the dolichol-phosphate mannose (DPM) synthase complex; tethers catalytic subunit DPM1 to the endoplasmic reticulum.</text>
</comment>
<comment type="pathway">
    <text>Protein modification; protein glycosylation.</text>
</comment>
<comment type="subunit">
    <text evidence="2 3">Component of the dolichol-phosphate mannose (DPM) synthase complex composed of DPM1, DPM2 and DPM3; within the complex, associates with DPM1 via its C-terminal domain and with DPM2 via its N-terminal portion (PubMed:10835346, PubMed:19576565). This interaction stabilizes DPM1 protein (PubMed:19576565).</text>
</comment>
<comment type="interaction">
    <interactant intactId="EBI-9087337">
        <id>Q9P2X0</id>
    </interactant>
    <interactant intactId="EBI-719526">
        <id>O60762</id>
        <label>DPM1</label>
    </interactant>
    <organismsDiffer>false</organismsDiffer>
    <experiments>5</experiments>
</comment>
<comment type="interaction">
    <interactant intactId="EBI-9087337">
        <id>Q9P2X0</id>
    </interactant>
    <interactant intactId="EBI-9097061">
        <id>O94777</id>
        <label>DPM2</label>
    </interactant>
    <organismsDiffer>false</organismsDiffer>
    <experiments>3</experiments>
</comment>
<comment type="interaction">
    <interactant intactId="EBI-9087337">
        <id>Q9P2X0</id>
    </interactant>
    <interactant intactId="EBI-9097185">
        <id>Q9Z325</id>
        <label>Dpm2</label>
    </interactant>
    <organismsDiffer>true</organismsDiffer>
    <experiments>2</experiments>
</comment>
<comment type="interaction">
    <interactant intactId="EBI-10962476">
        <id>Q9P2X0-2</id>
    </interactant>
    <interactant intactId="EBI-12201693">
        <id>Q8N128-2</id>
        <label>FAM177A1</label>
    </interactant>
    <organismsDiffer>false</organismsDiffer>
    <experiments>3</experiments>
</comment>
<comment type="interaction">
    <interactant intactId="EBI-10962476">
        <id>Q9P2X0-2</id>
    </interactant>
    <interactant intactId="EBI-725665">
        <id>Q9Y5U9</id>
        <label>IER3IP1</label>
    </interactant>
    <organismsDiffer>false</organismsDiffer>
    <experiments>3</experiments>
</comment>
<comment type="interaction">
    <interactant intactId="EBI-10962476">
        <id>Q9P2X0-2</id>
    </interactant>
    <interactant intactId="EBI-1058865">
        <id>O75396</id>
        <label>SEC22B</label>
    </interactant>
    <organismsDiffer>false</organismsDiffer>
    <experiments>3</experiments>
</comment>
<comment type="interaction">
    <interactant intactId="EBI-10962476">
        <id>Q9P2X0-2</id>
    </interactant>
    <interactant intactId="EBI-348587">
        <id>Q9BVK8</id>
        <label>TMEM147</label>
    </interactant>
    <organismsDiffer>false</organismsDiffer>
    <experiments>3</experiments>
</comment>
<comment type="subcellular location">
    <subcellularLocation>
        <location>Endoplasmic reticulum membrane</location>
        <topology>Multi-pass membrane protein</topology>
    </subcellularLocation>
</comment>
<comment type="alternative products">
    <event type="alternative splicing"/>
    <isoform>
        <id>Q9P2X0-1</id>
        <name>1</name>
        <name>Short</name>
        <sequence type="displayed"/>
    </isoform>
    <isoform>
        <id>Q9P2X0-2</id>
        <name>2</name>
        <name>Long</name>
        <sequence type="described" ref="VSP_001308"/>
    </isoform>
</comment>
<comment type="disease" evidence="6">
    <disease id="DI-05900">
        <name>Muscular dystrophy-dystroglycanopathy congenital with impaired intellectual development B15</name>
        <acronym>MDDGB15</acronym>
        <description>An autosomal recessive, congenital muscular disorder characterized by hyperCKemia, myopathic features observed on muscle biopsy, developmental delay, mildly impaired intellectual development with learning difficulties, epilepsy, and mild white matter abnormalities.</description>
        <dbReference type="MIM" id="618992"/>
    </disease>
    <text>The disease may be caused by variants affecting the gene represented in this entry.</text>
</comment>
<comment type="disease" evidence="3 4 5">
    <disease id="DI-02496">
        <name>Muscular dystrophy-dystroglycanopathy limb-girdle C15</name>
        <acronym>MDDGC15</acronym>
        <description>An autosomal recessive muscular dystrophy associated with a disorder of glycosylation resulting in under-glycosylated serum glycoproteins. MDDGC15 patients have muscle weakness, increased serum creatine kinase, dystrophic changes on muscle biopsy, and reduced O-mannosylation of alpha-dystroglycan.</description>
        <dbReference type="MIM" id="612937"/>
    </disease>
    <text>The disease is caused by variants affecting the gene represented in this entry.</text>
</comment>
<comment type="similarity">
    <text evidence="9">Belongs to the DPM3 family.</text>
</comment>
<gene>
    <name type="primary">DPM3</name>
</gene>
<feature type="chain" id="PRO_0000195000" description="Dolichol-phosphate mannosyltransferase subunit 3">
    <location>
        <begin position="1"/>
        <end position="92"/>
    </location>
</feature>
<feature type="transmembrane region" description="Helical" evidence="1">
    <location>
        <begin position="8"/>
        <end position="28"/>
    </location>
</feature>
<feature type="transmembrane region" description="Helical" evidence="1">
    <location>
        <begin position="37"/>
        <end position="57"/>
    </location>
</feature>
<feature type="splice variant" id="VSP_001308" description="In isoform 2." evidence="7 8">
    <original>M</original>
    <variation>MLSVGGLRLSLVRFSFLLLRGALLPSLAVTM</variation>
    <location>
        <position position="1"/>
    </location>
</feature>
<feature type="sequence variant" id="VAR_085122" description="In MDDGC15; uncertain significance; dbSNP:rs778481307." evidence="4 5">
    <original>L</original>
    <variation>P</variation>
    <location>
        <position position="14"/>
    </location>
</feature>
<feature type="sequence variant" id="VAR_085123" description="In MDDGB15; uncertain significance; dbSNP:rs745692004." evidence="6">
    <original>P</original>
    <variation>A</variation>
    <location>
        <position position="42"/>
    </location>
</feature>
<feature type="sequence variant" id="VAR_085124" description="In MDDGB15; uncertain significance; dbSNP:rs121908155." evidence="6">
    <location>
        <begin position="85"/>
        <end position="92"/>
    </location>
</feature>
<feature type="sequence variant" id="VAR_062518" description="In MDDGC15; when transfected into DPM3-deficient cells, only slightly restores dolichol-phosphate mannose synthase activity contrary to wild-type DPM3; reduced interaction with DPM1; dbSNP:rs121908155." evidence="3">
    <original>L</original>
    <variation>S</variation>
    <location>
        <position position="85"/>
    </location>
</feature>
<feature type="sequence conflict" description="In Ref. 1; BAA96291." evidence="9" ref="1">
    <original>L</original>
    <variation>V</variation>
    <location>
        <position position="90"/>
    </location>
</feature>
<name>DPM3_HUMAN</name>
<sequence>MTKLAQWLWGLAILGSTWVALTTGALGLELPLSCQEVLWPLPAYLLVSAGCYALGTVGYRVATFHDCEDAARELQSQIQEARADLARRGLRF</sequence>
<dbReference type="EMBL" id="AB028128">
    <property type="protein sequence ID" value="BAA96291.1"/>
    <property type="molecule type" value="mRNA"/>
</dbReference>
<dbReference type="EMBL" id="AF312922">
    <property type="protein sequence ID" value="AAK28487.1"/>
    <property type="molecule type" value="mRNA"/>
</dbReference>
<dbReference type="EMBL" id="AF312923">
    <property type="protein sequence ID" value="AAK28486.1"/>
    <property type="molecule type" value="mRNA"/>
</dbReference>
<dbReference type="EMBL" id="AL691442">
    <property type="status" value="NOT_ANNOTATED_CDS"/>
    <property type="molecule type" value="Genomic_DNA"/>
</dbReference>
<dbReference type="EMBL" id="CH471121">
    <property type="protein sequence ID" value="EAW53126.1"/>
    <property type="molecule type" value="Genomic_DNA"/>
</dbReference>
<dbReference type="EMBL" id="BC104202">
    <property type="protein sequence ID" value="AAI04203.1"/>
    <property type="molecule type" value="mRNA"/>
</dbReference>
<dbReference type="EMBL" id="BC104203">
    <property type="protein sequence ID" value="AAI04204.1"/>
    <property type="molecule type" value="mRNA"/>
</dbReference>
<dbReference type="CCDS" id="CCDS1094.1">
    <molecule id="Q9P2X0-2"/>
</dbReference>
<dbReference type="CCDS" id="CCDS1095.1">
    <molecule id="Q9P2X0-1"/>
</dbReference>
<dbReference type="RefSeq" id="NP_061846.2">
    <molecule id="Q9P2X0-2"/>
    <property type="nucleotide sequence ID" value="NM_018973.3"/>
</dbReference>
<dbReference type="RefSeq" id="NP_714963.1">
    <molecule id="Q9P2X0-1"/>
    <property type="nucleotide sequence ID" value="NM_153741.2"/>
</dbReference>
<dbReference type="RefSeq" id="XP_016856987.1">
    <molecule id="Q9P2X0-1"/>
    <property type="nucleotide sequence ID" value="XM_017001498.2"/>
</dbReference>
<dbReference type="RefSeq" id="XP_054193079.1">
    <molecule id="Q9P2X0-1"/>
    <property type="nucleotide sequence ID" value="XM_054337104.1"/>
</dbReference>
<dbReference type="SMR" id="Q9P2X0"/>
<dbReference type="BioGRID" id="119935">
    <property type="interactions" value="21"/>
</dbReference>
<dbReference type="ComplexPortal" id="CPX-6268">
    <property type="entry name" value="Dolichol-phosphate mannosyltransferase complex"/>
</dbReference>
<dbReference type="CORUM" id="Q9P2X0"/>
<dbReference type="FunCoup" id="Q9P2X0">
    <property type="interactions" value="380"/>
</dbReference>
<dbReference type="IntAct" id="Q9P2X0">
    <property type="interactions" value="16"/>
</dbReference>
<dbReference type="STRING" id="9606.ENSP00000357384"/>
<dbReference type="GlyGen" id="Q9P2X0">
    <property type="glycosylation" value="2 sites, 2 O-linked glycans (2 sites)"/>
</dbReference>
<dbReference type="iPTMnet" id="Q9P2X0"/>
<dbReference type="PhosphoSitePlus" id="Q9P2X0"/>
<dbReference type="SwissPalm" id="Q9P2X0"/>
<dbReference type="BioMuta" id="DPM3"/>
<dbReference type="DMDM" id="125987822"/>
<dbReference type="jPOST" id="Q9P2X0"/>
<dbReference type="MassIVE" id="Q9P2X0"/>
<dbReference type="PaxDb" id="9606-ENSP00000357384"/>
<dbReference type="PeptideAtlas" id="Q9P2X0"/>
<dbReference type="ProteomicsDB" id="83907">
    <molecule id="Q9P2X0-1"/>
</dbReference>
<dbReference type="ProteomicsDB" id="83908">
    <molecule id="Q9P2X0-2"/>
</dbReference>
<dbReference type="Pumba" id="Q9P2X0"/>
<dbReference type="TopDownProteomics" id="Q9P2X0-1">
    <molecule id="Q9P2X0-1"/>
</dbReference>
<dbReference type="TopDownProteomics" id="Q9P2X0-2">
    <molecule id="Q9P2X0-2"/>
</dbReference>
<dbReference type="Antibodypedia" id="3056">
    <property type="antibodies" value="34 antibodies from 20 providers"/>
</dbReference>
<dbReference type="DNASU" id="54344"/>
<dbReference type="Ensembl" id="ENST00000341298.3">
    <molecule id="Q9P2X0-1"/>
    <property type="protein sequence ID" value="ENSP00000344338.3"/>
    <property type="gene ID" value="ENSG00000179085.8"/>
</dbReference>
<dbReference type="Ensembl" id="ENST00000368399.1">
    <molecule id="Q9P2X0-2"/>
    <property type="protein sequence ID" value="ENSP00000357384.1"/>
    <property type="gene ID" value="ENSG00000179085.8"/>
</dbReference>
<dbReference type="Ensembl" id="ENST00000368400.5">
    <molecule id="Q9P2X0-1"/>
    <property type="protein sequence ID" value="ENSP00000357385.5"/>
    <property type="gene ID" value="ENSG00000179085.8"/>
</dbReference>
<dbReference type="GeneID" id="54344"/>
<dbReference type="KEGG" id="hsa:54344"/>
<dbReference type="MANE-Select" id="ENST00000368400.5">
    <property type="protein sequence ID" value="ENSP00000357385.5"/>
    <property type="RefSeq nucleotide sequence ID" value="NM_153741.2"/>
    <property type="RefSeq protein sequence ID" value="NP_714963.1"/>
</dbReference>
<dbReference type="UCSC" id="uc001fhm.3">
    <molecule id="Q9P2X0-1"/>
    <property type="organism name" value="human"/>
</dbReference>
<dbReference type="AGR" id="HGNC:3007"/>
<dbReference type="CTD" id="54344"/>
<dbReference type="DisGeNET" id="54344"/>
<dbReference type="GeneCards" id="DPM3"/>
<dbReference type="GeneReviews" id="DPM3"/>
<dbReference type="HGNC" id="HGNC:3007">
    <property type="gene designation" value="DPM3"/>
</dbReference>
<dbReference type="HPA" id="ENSG00000179085">
    <property type="expression patterns" value="Low tissue specificity"/>
</dbReference>
<dbReference type="MalaCards" id="DPM3"/>
<dbReference type="MIM" id="605951">
    <property type="type" value="gene"/>
</dbReference>
<dbReference type="MIM" id="612937">
    <property type="type" value="phenotype"/>
</dbReference>
<dbReference type="MIM" id="618992">
    <property type="type" value="phenotype"/>
</dbReference>
<dbReference type="neXtProt" id="NX_Q9P2X0"/>
<dbReference type="OpenTargets" id="ENSG00000179085"/>
<dbReference type="Orphanet" id="263494">
    <property type="disease" value="DPM3-CDG"/>
</dbReference>
<dbReference type="PharmGKB" id="PA27465"/>
<dbReference type="VEuPathDB" id="HostDB:ENSG00000179085"/>
<dbReference type="eggNOG" id="KOG4841">
    <property type="taxonomic scope" value="Eukaryota"/>
</dbReference>
<dbReference type="GeneTree" id="ENSGT00390000008892"/>
<dbReference type="HOGENOM" id="CLU_150782_0_1_1"/>
<dbReference type="InParanoid" id="Q9P2X0"/>
<dbReference type="OrthoDB" id="2014333at2759"/>
<dbReference type="PAN-GO" id="Q9P2X0">
    <property type="GO annotations" value="3 GO annotations based on evolutionary models"/>
</dbReference>
<dbReference type="PhylomeDB" id="Q9P2X0"/>
<dbReference type="TreeFam" id="TF300274"/>
<dbReference type="BioCyc" id="MetaCyc:ENSG00000179085-MONOMER"/>
<dbReference type="BRENDA" id="2.4.1.83">
    <property type="organism ID" value="2681"/>
</dbReference>
<dbReference type="PathwayCommons" id="Q9P2X0"/>
<dbReference type="Reactome" id="R-HSA-162699">
    <property type="pathway name" value="Synthesis of dolichyl-phosphate mannose"/>
</dbReference>
<dbReference type="Reactome" id="R-HSA-4717374">
    <property type="pathway name" value="Defective DPM1 causes DPM1-CDG"/>
</dbReference>
<dbReference type="Reactome" id="R-HSA-4719360">
    <property type="pathway name" value="Defective DPM3 causes DPM3-CDG"/>
</dbReference>
<dbReference type="Reactome" id="R-HSA-4719377">
    <property type="pathway name" value="Defective DPM2 causes DPM2-CDG"/>
</dbReference>
<dbReference type="SignaLink" id="Q9P2X0"/>
<dbReference type="SIGNOR" id="Q9P2X0"/>
<dbReference type="UniPathway" id="UPA00378"/>
<dbReference type="BioGRID-ORCS" id="54344">
    <property type="hits" value="105 hits in 1150 CRISPR screens"/>
</dbReference>
<dbReference type="ChiTaRS" id="DPM3">
    <property type="organism name" value="human"/>
</dbReference>
<dbReference type="GeneWiki" id="DPM3"/>
<dbReference type="GenomeRNAi" id="54344"/>
<dbReference type="Pharos" id="Q9P2X0">
    <property type="development level" value="Tdark"/>
</dbReference>
<dbReference type="PRO" id="PR:Q9P2X0"/>
<dbReference type="Proteomes" id="UP000005640">
    <property type="component" value="Chromosome 1"/>
</dbReference>
<dbReference type="RNAct" id="Q9P2X0">
    <property type="molecule type" value="protein"/>
</dbReference>
<dbReference type="Bgee" id="ENSG00000179085">
    <property type="expression patterns" value="Expressed in mucosa of transverse colon and 204 other cell types or tissues"/>
</dbReference>
<dbReference type="ExpressionAtlas" id="Q9P2X0">
    <property type="expression patterns" value="baseline and differential"/>
</dbReference>
<dbReference type="GO" id="GO:0033185">
    <property type="term" value="C:dolichol-phosphate-mannose synthase complex"/>
    <property type="evidence" value="ECO:0000314"/>
    <property type="project" value="UniProtKB"/>
</dbReference>
<dbReference type="GO" id="GO:0005783">
    <property type="term" value="C:endoplasmic reticulum"/>
    <property type="evidence" value="ECO:0000314"/>
    <property type="project" value="UniProtKB"/>
</dbReference>
<dbReference type="GO" id="GO:0005789">
    <property type="term" value="C:endoplasmic reticulum membrane"/>
    <property type="evidence" value="ECO:0000314"/>
    <property type="project" value="HGNC-UCL"/>
</dbReference>
<dbReference type="GO" id="GO:0016020">
    <property type="term" value="C:membrane"/>
    <property type="evidence" value="ECO:0007005"/>
    <property type="project" value="UniProtKB"/>
</dbReference>
<dbReference type="GO" id="GO:0160214">
    <property type="term" value="F:endoplasmic reticulum-plasma membrane adaptor activity"/>
    <property type="evidence" value="ECO:0000250"/>
    <property type="project" value="HGNC-UCL"/>
</dbReference>
<dbReference type="GO" id="GO:0008047">
    <property type="term" value="F:enzyme activator activity"/>
    <property type="evidence" value="ECO:0000314"/>
    <property type="project" value="HGNC-UCL"/>
</dbReference>
<dbReference type="GO" id="GO:0019348">
    <property type="term" value="P:dolichol metabolic process"/>
    <property type="evidence" value="ECO:0000314"/>
    <property type="project" value="ComplexPortal"/>
</dbReference>
<dbReference type="GO" id="GO:0180047">
    <property type="term" value="P:dolichol phosphate mannose biosynthetic process"/>
    <property type="evidence" value="ECO:0000314"/>
    <property type="project" value="UniProtKB"/>
</dbReference>
<dbReference type="GO" id="GO:0006506">
    <property type="term" value="P:GPI anchor biosynthetic process"/>
    <property type="evidence" value="ECO:0000318"/>
    <property type="project" value="GO_Central"/>
</dbReference>
<dbReference type="GO" id="GO:0035269">
    <property type="term" value="P:protein O-linked mannosylation"/>
    <property type="evidence" value="ECO:0000250"/>
    <property type="project" value="HGNC-UCL"/>
</dbReference>
<dbReference type="InterPro" id="IPR013174">
    <property type="entry name" value="DPM3"/>
</dbReference>
<dbReference type="PANTHER" id="PTHR16433">
    <property type="entry name" value="DOLICHOL-PHOSPHATE MANNOSYLTRANSFERASE SUBUNIT 3"/>
    <property type="match status" value="1"/>
</dbReference>
<dbReference type="PANTHER" id="PTHR16433:SF0">
    <property type="entry name" value="DOLICHOL-PHOSPHATE MANNOSYLTRANSFERASE SUBUNIT 3"/>
    <property type="match status" value="1"/>
</dbReference>
<dbReference type="Pfam" id="PF08285">
    <property type="entry name" value="DPM3"/>
    <property type="match status" value="1"/>
</dbReference>
<keyword id="KW-0025">Alternative splicing</keyword>
<keyword id="KW-0900">Congenital disorder of glycosylation</keyword>
<keyword id="KW-0912">Congenital muscular dystrophy</keyword>
<keyword id="KW-0903">Direct protein sequencing</keyword>
<keyword id="KW-0225">Disease variant</keyword>
<keyword id="KW-1215">Dystroglycanopathy</keyword>
<keyword id="KW-0256">Endoplasmic reticulum</keyword>
<keyword id="KW-0472">Membrane</keyword>
<keyword id="KW-1267">Proteomics identification</keyword>
<keyword id="KW-1185">Reference proteome</keyword>
<keyword id="KW-0812">Transmembrane</keyword>
<keyword id="KW-1133">Transmembrane helix</keyword>
<accession>Q9P2X0</accession>
<accession>Q5SR62</accession>
<accession>Q5SR63</accession>
<accession>Q9BXN4</accession>
<accession>Q9BXN5</accession>
<evidence type="ECO:0000255" key="1"/>
<evidence type="ECO:0000269" key="2">
    <source>
    </source>
</evidence>
<evidence type="ECO:0000269" key="3">
    <source>
    </source>
</evidence>
<evidence type="ECO:0000269" key="4">
    <source>
    </source>
</evidence>
<evidence type="ECO:0000269" key="5">
    <source>
    </source>
</evidence>
<evidence type="ECO:0000269" key="6">
    <source>
    </source>
</evidence>
<evidence type="ECO:0000303" key="7">
    <source>
    </source>
</evidence>
<evidence type="ECO:0000303" key="8">
    <source>
    </source>
</evidence>
<evidence type="ECO:0000305" key="9"/>
<protein>
    <recommendedName>
        <fullName>Dolichol-phosphate mannosyltransferase subunit 3</fullName>
    </recommendedName>
    <alternativeName>
        <fullName>Dolichol-phosphate mannose synthase subunit 3</fullName>
        <shortName>DPM synthase subunit 3</shortName>
    </alternativeName>
    <alternativeName>
        <fullName>Dolichyl-phosphate beta-D-mannosyltransferase subunit 3</fullName>
    </alternativeName>
    <alternativeName>
        <fullName>Mannose-P-dolichol synthase subunit 3</fullName>
        <shortName>MPD synthase subunit 3</shortName>
    </alternativeName>
    <alternativeName>
        <fullName>Prostin-1</fullName>
    </alternativeName>
</protein>
<proteinExistence type="evidence at protein level"/>
<reference key="1">
    <citation type="journal article" date="2000" name="EMBO J.">
        <title>Human dolichol-phosphate-mannose synthase consists of three subunits, DPM1, DPM2 and DPM3.</title>
        <authorList>
            <person name="Maeda Y."/>
            <person name="Tanaka S."/>
            <person name="Hino J."/>
            <person name="Kangawa K."/>
            <person name="Kinoshita T."/>
        </authorList>
    </citation>
    <scope>NUCLEOTIDE SEQUENCE [MRNA] (ISOFORM 1)</scope>
    <scope>PROTEIN SEQUENCE OF 1-13</scope>
    <scope>FUNCTION</scope>
    <scope>SUBUNIT</scope>
</reference>
<reference key="2">
    <citation type="journal article" date="2001" name="Oncogene">
        <title>Dolichol-phosphate-mannose-3 (DPM3)/prostin-1 is a novel phospholipase C-gamma regulated gene negatively associated with prostate tumor invasion.</title>
        <authorList>
            <person name="Manos E.J."/>
            <person name="Kim M.L."/>
            <person name="Kassis J."/>
            <person name="Chang P.Y."/>
            <person name="Wells A."/>
            <person name="Jones D.A."/>
        </authorList>
    </citation>
    <scope>NUCLEOTIDE SEQUENCE [MRNA] (ISOFORMS 1 AND 2)</scope>
</reference>
<reference key="3">
    <citation type="journal article" date="2006" name="Nature">
        <title>The DNA sequence and biological annotation of human chromosome 1.</title>
        <authorList>
            <person name="Gregory S.G."/>
            <person name="Barlow K.F."/>
            <person name="McLay K.E."/>
            <person name="Kaul R."/>
            <person name="Swarbreck D."/>
            <person name="Dunham A."/>
            <person name="Scott C.E."/>
            <person name="Howe K.L."/>
            <person name="Woodfine K."/>
            <person name="Spencer C.C.A."/>
            <person name="Jones M.C."/>
            <person name="Gillson C."/>
            <person name="Searle S."/>
            <person name="Zhou Y."/>
            <person name="Kokocinski F."/>
            <person name="McDonald L."/>
            <person name="Evans R."/>
            <person name="Phillips K."/>
            <person name="Atkinson A."/>
            <person name="Cooper R."/>
            <person name="Jones C."/>
            <person name="Hall R.E."/>
            <person name="Andrews T.D."/>
            <person name="Lloyd C."/>
            <person name="Ainscough R."/>
            <person name="Almeida J.P."/>
            <person name="Ambrose K.D."/>
            <person name="Anderson F."/>
            <person name="Andrew R.W."/>
            <person name="Ashwell R.I.S."/>
            <person name="Aubin K."/>
            <person name="Babbage A.K."/>
            <person name="Bagguley C.L."/>
            <person name="Bailey J."/>
            <person name="Beasley H."/>
            <person name="Bethel G."/>
            <person name="Bird C.P."/>
            <person name="Bray-Allen S."/>
            <person name="Brown J.Y."/>
            <person name="Brown A.J."/>
            <person name="Buckley D."/>
            <person name="Burton J."/>
            <person name="Bye J."/>
            <person name="Carder C."/>
            <person name="Chapman J.C."/>
            <person name="Clark S.Y."/>
            <person name="Clarke G."/>
            <person name="Clee C."/>
            <person name="Cobley V."/>
            <person name="Collier R.E."/>
            <person name="Corby N."/>
            <person name="Coville G.J."/>
            <person name="Davies J."/>
            <person name="Deadman R."/>
            <person name="Dunn M."/>
            <person name="Earthrowl M."/>
            <person name="Ellington A.G."/>
            <person name="Errington H."/>
            <person name="Frankish A."/>
            <person name="Frankland J."/>
            <person name="French L."/>
            <person name="Garner P."/>
            <person name="Garnett J."/>
            <person name="Gay L."/>
            <person name="Ghori M.R.J."/>
            <person name="Gibson R."/>
            <person name="Gilby L.M."/>
            <person name="Gillett W."/>
            <person name="Glithero R.J."/>
            <person name="Grafham D.V."/>
            <person name="Griffiths C."/>
            <person name="Griffiths-Jones S."/>
            <person name="Grocock R."/>
            <person name="Hammond S."/>
            <person name="Harrison E.S.I."/>
            <person name="Hart E."/>
            <person name="Haugen E."/>
            <person name="Heath P.D."/>
            <person name="Holmes S."/>
            <person name="Holt K."/>
            <person name="Howden P.J."/>
            <person name="Hunt A.R."/>
            <person name="Hunt S.E."/>
            <person name="Hunter G."/>
            <person name="Isherwood J."/>
            <person name="James R."/>
            <person name="Johnson C."/>
            <person name="Johnson D."/>
            <person name="Joy A."/>
            <person name="Kay M."/>
            <person name="Kershaw J.K."/>
            <person name="Kibukawa M."/>
            <person name="Kimberley A.M."/>
            <person name="King A."/>
            <person name="Knights A.J."/>
            <person name="Lad H."/>
            <person name="Laird G."/>
            <person name="Lawlor S."/>
            <person name="Leongamornlert D.A."/>
            <person name="Lloyd D.M."/>
            <person name="Loveland J."/>
            <person name="Lovell J."/>
            <person name="Lush M.J."/>
            <person name="Lyne R."/>
            <person name="Martin S."/>
            <person name="Mashreghi-Mohammadi M."/>
            <person name="Matthews L."/>
            <person name="Matthews N.S.W."/>
            <person name="McLaren S."/>
            <person name="Milne S."/>
            <person name="Mistry S."/>
            <person name="Moore M.J.F."/>
            <person name="Nickerson T."/>
            <person name="O'Dell C.N."/>
            <person name="Oliver K."/>
            <person name="Palmeiri A."/>
            <person name="Palmer S.A."/>
            <person name="Parker A."/>
            <person name="Patel D."/>
            <person name="Pearce A.V."/>
            <person name="Peck A.I."/>
            <person name="Pelan S."/>
            <person name="Phelps K."/>
            <person name="Phillimore B.J."/>
            <person name="Plumb R."/>
            <person name="Rajan J."/>
            <person name="Raymond C."/>
            <person name="Rouse G."/>
            <person name="Saenphimmachak C."/>
            <person name="Sehra H.K."/>
            <person name="Sheridan E."/>
            <person name="Shownkeen R."/>
            <person name="Sims S."/>
            <person name="Skuce C.D."/>
            <person name="Smith M."/>
            <person name="Steward C."/>
            <person name="Subramanian S."/>
            <person name="Sycamore N."/>
            <person name="Tracey A."/>
            <person name="Tromans A."/>
            <person name="Van Helmond Z."/>
            <person name="Wall M."/>
            <person name="Wallis J.M."/>
            <person name="White S."/>
            <person name="Whitehead S.L."/>
            <person name="Wilkinson J.E."/>
            <person name="Willey D.L."/>
            <person name="Williams H."/>
            <person name="Wilming L."/>
            <person name="Wray P.W."/>
            <person name="Wu Z."/>
            <person name="Coulson A."/>
            <person name="Vaudin M."/>
            <person name="Sulston J.E."/>
            <person name="Durbin R.M."/>
            <person name="Hubbard T."/>
            <person name="Wooster R."/>
            <person name="Dunham I."/>
            <person name="Carter N.P."/>
            <person name="McVean G."/>
            <person name="Ross M.T."/>
            <person name="Harrow J."/>
            <person name="Olson M.V."/>
            <person name="Beck S."/>
            <person name="Rogers J."/>
            <person name="Bentley D.R."/>
        </authorList>
    </citation>
    <scope>NUCLEOTIDE SEQUENCE [LARGE SCALE GENOMIC DNA]</scope>
</reference>
<reference key="4">
    <citation type="submission" date="2005-09" db="EMBL/GenBank/DDBJ databases">
        <authorList>
            <person name="Mural R.J."/>
            <person name="Istrail S."/>
            <person name="Sutton G."/>
            <person name="Florea L."/>
            <person name="Halpern A.L."/>
            <person name="Mobarry C.M."/>
            <person name="Lippert R."/>
            <person name="Walenz B."/>
            <person name="Shatkay H."/>
            <person name="Dew I."/>
            <person name="Miller J.R."/>
            <person name="Flanigan M.J."/>
            <person name="Edwards N.J."/>
            <person name="Bolanos R."/>
            <person name="Fasulo D."/>
            <person name="Halldorsson B.V."/>
            <person name="Hannenhalli S."/>
            <person name="Turner R."/>
            <person name="Yooseph S."/>
            <person name="Lu F."/>
            <person name="Nusskern D.R."/>
            <person name="Shue B.C."/>
            <person name="Zheng X.H."/>
            <person name="Zhong F."/>
            <person name="Delcher A.L."/>
            <person name="Huson D.H."/>
            <person name="Kravitz S.A."/>
            <person name="Mouchard L."/>
            <person name="Reinert K."/>
            <person name="Remington K.A."/>
            <person name="Clark A.G."/>
            <person name="Waterman M.S."/>
            <person name="Eichler E.E."/>
            <person name="Adams M.D."/>
            <person name="Hunkapiller M.W."/>
            <person name="Myers E.W."/>
            <person name="Venter J.C."/>
        </authorList>
    </citation>
    <scope>NUCLEOTIDE SEQUENCE [LARGE SCALE GENOMIC DNA]</scope>
</reference>
<reference key="5">
    <citation type="journal article" date="2004" name="Genome Res.">
        <title>The status, quality, and expansion of the NIH full-length cDNA project: the Mammalian Gene Collection (MGC).</title>
        <authorList>
            <consortium name="The MGC Project Team"/>
        </authorList>
    </citation>
    <scope>NUCLEOTIDE SEQUENCE [LARGE SCALE MRNA] (ISOFORM 2)</scope>
</reference>
<reference key="6">
    <citation type="journal article" date="2011" name="BMC Syst. Biol.">
        <title>Initial characterization of the human central proteome.</title>
        <authorList>
            <person name="Burkard T.R."/>
            <person name="Planyavsky M."/>
            <person name="Kaupe I."/>
            <person name="Breitwieser F.P."/>
            <person name="Buerckstuemmer T."/>
            <person name="Bennett K.L."/>
            <person name="Superti-Furga G."/>
            <person name="Colinge J."/>
        </authorList>
    </citation>
    <scope>IDENTIFICATION BY MASS SPECTROMETRY [LARGE SCALE ANALYSIS]</scope>
</reference>
<reference key="7">
    <citation type="journal article" date="2015" name="Proteomics">
        <title>N-terminome analysis of the human mitochondrial proteome.</title>
        <authorList>
            <person name="Vaca Jacome A.S."/>
            <person name="Rabilloud T."/>
            <person name="Schaeffer-Reiss C."/>
            <person name="Rompais M."/>
            <person name="Ayoub D."/>
            <person name="Lane L."/>
            <person name="Bairoch A."/>
            <person name="Van Dorsselaer A."/>
            <person name="Carapito C."/>
        </authorList>
    </citation>
    <scope>IDENTIFICATION BY MASS SPECTROMETRY [LARGE SCALE ANALYSIS]</scope>
</reference>
<reference key="8">
    <citation type="journal article" date="2009" name="Am. J. Hum. Genet.">
        <title>Deficiency of Dol-P-Man synthase subunit DPM3 bridges the congenital disorders of glycosylation with the dystroglycanopathies.</title>
        <authorList>
            <person name="Lefeber D.J."/>
            <person name="Schonberger J."/>
            <person name="Morava E."/>
            <person name="Guillard M."/>
            <person name="Huyben K.M."/>
            <person name="Verrijp K."/>
            <person name="Grafakou O."/>
            <person name="Evangeliou A."/>
            <person name="Preijers F.W."/>
            <person name="Manta P."/>
            <person name="Yildiz J."/>
            <person name="Grunewald S."/>
            <person name="Spilioti M."/>
            <person name="van den Elzen C."/>
            <person name="Klein D."/>
            <person name="Hess D."/>
            <person name="Ashida H."/>
            <person name="Hofsteenge J."/>
            <person name="Maeda Y."/>
            <person name="van den Heuvel L."/>
            <person name="Lammens M."/>
            <person name="Lehle L."/>
            <person name="Wevers R.A."/>
        </authorList>
    </citation>
    <scope>INVOLVEMENT IN MDDGC15</scope>
    <scope>VARIANT MDDGC15 SER-85</scope>
    <scope>CHARACTERIZATION OF VARIANT MDDGC15 SER-85</scope>
    <scope>INTERACTION WITH DPM1</scope>
</reference>
<reference key="9">
    <citation type="journal article" date="2017" name="Neuromuscul. Disord.">
        <title>A homozygous DPM3 mutation in a patient with alpha-dystroglycan-related limb girdle muscular dystrophy.</title>
        <authorList>
            <person name="Van den Bergh P.Y.K."/>
            <person name="Sznajer Y."/>
            <person name="Van Parys V."/>
            <person name="van Tol W."/>
            <person name="Wevers R.A."/>
            <person name="Lefeber D.J."/>
            <person name="Xu L."/>
            <person name="Lek M."/>
            <person name="MacArthur D.G."/>
            <person name="Johnson K."/>
            <person name="Phillips L."/>
            <person name="Toepf A."/>
            <person name="Straub V."/>
        </authorList>
    </citation>
    <scope>INVOLVEMENT IN MDDGC15</scope>
    <scope>VARIANT MDDGC15 PRO-14</scope>
</reference>
<reference key="10">
    <citation type="journal article" date="2018" name="Neuromuscul. Disord.">
        <title>Corrigendum to 'A homozygous DPM3 mutation in a patient with alpha-dystroglycan-related limb girdle muscular dystrophy' [Neuromuscular disorders 27/11 (2017) 1043-1046].</title>
        <authorList>
            <person name="Van den Bergh P.Y.K."/>
            <person name="Sznajer Y."/>
            <person name="Van Parys V."/>
            <person name="van Tol W."/>
            <person name="Wevers R.A."/>
            <person name="Lefeber D.J."/>
            <person name="Xu L."/>
            <person name="Lek M."/>
            <person name="MacArthur D.G."/>
            <person name="Johnson K."/>
            <person name="Phillips L."/>
            <person name="Toepf A."/>
            <person name="Straub V."/>
        </authorList>
    </citation>
    <scope>ERRATUM OF PUBMED:28803818</scope>
</reference>
<reference key="11">
    <citation type="journal article" date="2019" name="Clin. Genet.">
        <title>Novel mutations in DPM3 cause dystroglycanopathy with central nervous system involvement.</title>
        <authorList>
            <person name="Fu J."/>
            <person name="Ma M."/>
            <person name="Song J."/>
            <person name="Pang M."/>
            <person name="Yang L."/>
            <person name="Li G."/>
            <person name="Zhang J."/>
        </authorList>
    </citation>
    <scope>INVOLVEMENT IN MDDGB15</scope>
    <scope>VARIANTS MDDGB15 ALA-42 AND 85-LEU--PHE-92 DEL</scope>
</reference>
<reference key="12">
    <citation type="journal article" date="2019" name="Neuromuscul. Disord.">
        <title>Dilated cardiomyopathy and limb-girdle muscular dystrophy-dystroglycanopathy due to novel pathogenic variants in the DPM3 gene.</title>
        <authorList>
            <person name="Svahn J."/>
            <person name="Laforet P."/>
            <person name="Vial C."/>
            <person name="Streichenberger N."/>
            <person name="Romero N."/>
            <person name="Bouchet-Seraphin C."/>
            <person name="Bruneel A."/>
            <person name="Dupre T."/>
            <person name="Seta N."/>
            <person name="Menassa R."/>
            <person name="Michel-Calemard L."/>
            <person name="Stojkovic T."/>
        </authorList>
    </citation>
    <scope>INVOLVEMENT IN MDDGC15</scope>
    <scope>VARIANT MDDGC15 PRO-14</scope>
</reference>
<organism>
    <name type="scientific">Homo sapiens</name>
    <name type="common">Human</name>
    <dbReference type="NCBI Taxonomy" id="9606"/>
    <lineage>
        <taxon>Eukaryota</taxon>
        <taxon>Metazoa</taxon>
        <taxon>Chordata</taxon>
        <taxon>Craniata</taxon>
        <taxon>Vertebrata</taxon>
        <taxon>Euteleostomi</taxon>
        <taxon>Mammalia</taxon>
        <taxon>Eutheria</taxon>
        <taxon>Euarchontoglires</taxon>
        <taxon>Primates</taxon>
        <taxon>Haplorrhini</taxon>
        <taxon>Catarrhini</taxon>
        <taxon>Hominidae</taxon>
        <taxon>Homo</taxon>
    </lineage>
</organism>